<feature type="chain" id="PRO_0000185740" description="Tumor protein D52">
    <location>
        <begin position="1"/>
        <end position="184"/>
    </location>
</feature>
<feature type="region of interest" description="Disordered" evidence="4">
    <location>
        <begin position="1"/>
        <end position="43"/>
    </location>
</feature>
<feature type="region of interest" description="Disordered" evidence="4">
    <location>
        <begin position="147"/>
        <end position="184"/>
    </location>
</feature>
<feature type="coiled-coil region" evidence="3">
    <location>
        <begin position="22"/>
        <end position="74"/>
    </location>
</feature>
<feature type="compositionally biased region" description="Polar residues" evidence="4">
    <location>
        <begin position="162"/>
        <end position="184"/>
    </location>
</feature>
<feature type="modified residue" description="Phosphoserine" evidence="2">
    <location>
        <position position="136"/>
    </location>
</feature>
<keyword id="KW-0175">Coiled coil</keyword>
<keyword id="KW-0597">Phosphoprotein</keyword>
<keyword id="KW-1185">Reference proteome</keyword>
<protein>
    <recommendedName>
        <fullName>Tumor protein D52</fullName>
    </recommendedName>
    <alternativeName>
        <fullName>28 kDa calcium-dependent phosphoprotein</fullName>
    </alternativeName>
    <alternativeName>
        <fullName>pp28</fullName>
    </alternativeName>
</protein>
<organism>
    <name type="scientific">Oryctolagus cuniculus</name>
    <name type="common">Rabbit</name>
    <dbReference type="NCBI Taxonomy" id="9986"/>
    <lineage>
        <taxon>Eukaryota</taxon>
        <taxon>Metazoa</taxon>
        <taxon>Chordata</taxon>
        <taxon>Craniata</taxon>
        <taxon>Vertebrata</taxon>
        <taxon>Euteleostomi</taxon>
        <taxon>Mammalia</taxon>
        <taxon>Eutheria</taxon>
        <taxon>Euarchontoglires</taxon>
        <taxon>Glires</taxon>
        <taxon>Lagomorpha</taxon>
        <taxon>Leporidae</taxon>
        <taxon>Oryctolagus</taxon>
    </lineage>
</organism>
<name>TPD52_RABIT</name>
<reference key="1">
    <citation type="journal article" date="1996" name="J. Biol. Chem.">
        <title>Purification, cloning, and expression of a novel, endogenous, calcium-sensitive, 28-kDa phosphoprotein.</title>
        <authorList>
            <person name="Parente J.A."/>
            <person name="Goldenring J.R."/>
            <person name="Petropoulos A.C."/>
            <person name="Hellman U."/>
            <person name="Chew C.S."/>
        </authorList>
    </citation>
    <scope>NUCLEOTIDE SEQUENCE [MRNA]</scope>
    <source>
        <tissue>Gastric fundus</tissue>
    </source>
</reference>
<accession>Q95212</accession>
<gene>
    <name type="primary">TPD52</name>
    <name type="synonym">CSPP28</name>
</gene>
<dbReference type="EMBL" id="U35428">
    <property type="protein sequence ID" value="AAC48616.1"/>
    <property type="molecule type" value="mRNA"/>
</dbReference>
<dbReference type="RefSeq" id="NP_001075829.1">
    <property type="nucleotide sequence ID" value="NM_001082360.1"/>
</dbReference>
<dbReference type="SMR" id="Q95212"/>
<dbReference type="FunCoup" id="Q95212">
    <property type="interactions" value="603"/>
</dbReference>
<dbReference type="STRING" id="9986.ENSOCUP00000033733"/>
<dbReference type="GeneID" id="100009212"/>
<dbReference type="KEGG" id="ocu:100009212"/>
<dbReference type="CTD" id="7163"/>
<dbReference type="InParanoid" id="Q95212"/>
<dbReference type="OrthoDB" id="10000687at2759"/>
<dbReference type="Proteomes" id="UP000001811">
    <property type="component" value="Unplaced"/>
</dbReference>
<dbReference type="GO" id="GO:0005737">
    <property type="term" value="C:cytoplasm"/>
    <property type="evidence" value="ECO:0000250"/>
    <property type="project" value="UniProtKB"/>
</dbReference>
<dbReference type="GO" id="GO:0005783">
    <property type="term" value="C:endoplasmic reticulum"/>
    <property type="evidence" value="ECO:0000250"/>
    <property type="project" value="UniProtKB"/>
</dbReference>
<dbReference type="GO" id="GO:0048471">
    <property type="term" value="C:perinuclear region of cytoplasm"/>
    <property type="evidence" value="ECO:0000250"/>
    <property type="project" value="UniProtKB"/>
</dbReference>
<dbReference type="GO" id="GO:0005509">
    <property type="term" value="F:calcium ion binding"/>
    <property type="evidence" value="ECO:0000250"/>
    <property type="project" value="UniProtKB"/>
</dbReference>
<dbReference type="GO" id="GO:0042803">
    <property type="term" value="F:protein homodimerization activity"/>
    <property type="evidence" value="ECO:0000250"/>
    <property type="project" value="UniProtKB"/>
</dbReference>
<dbReference type="GO" id="GO:0030183">
    <property type="term" value="P:B cell differentiation"/>
    <property type="evidence" value="ECO:0000250"/>
    <property type="project" value="UniProtKB"/>
</dbReference>
<dbReference type="InterPro" id="IPR007327">
    <property type="entry name" value="TPD52"/>
</dbReference>
<dbReference type="PANTHER" id="PTHR19307">
    <property type="entry name" value="TUMOR PROTEIN D52"/>
    <property type="match status" value="1"/>
</dbReference>
<dbReference type="PANTHER" id="PTHR19307:SF12">
    <property type="entry name" value="TUMOR PROTEIN D52"/>
    <property type="match status" value="1"/>
</dbReference>
<dbReference type="Pfam" id="PF04201">
    <property type="entry name" value="TPD52"/>
    <property type="match status" value="1"/>
</dbReference>
<sequence>MDRGEQGLLRTDTVPEEAEDAAATISATETLSEEEQEELRRELAKVEEEIQTLSQVLAAREKHLAEIKRKLGINSLQELKQNIAKGWQDVTATSAYKKTSETLSQAGQKASAAFSSVGSVITKKLEDVKNSPTFKSFEEKVENLKSKVGGTKPAGGDFGEVLNSTANASATSGEPVPEQTQEGL</sequence>
<proteinExistence type="evidence at transcript level"/>
<evidence type="ECO:0000250" key="1"/>
<evidence type="ECO:0000250" key="2">
    <source>
        <dbReference type="UniProtKB" id="Q62393"/>
    </source>
</evidence>
<evidence type="ECO:0000255" key="3"/>
<evidence type="ECO:0000256" key="4">
    <source>
        <dbReference type="SAM" id="MobiDB-lite"/>
    </source>
</evidence>
<evidence type="ECO:0000305" key="5"/>
<comment type="subunit">
    <text evidence="1">Forms a homodimer or heterodimer with other members of the family.</text>
</comment>
<comment type="PTM">
    <text>Phosphorylated in a calcium/calmodulin-dependent manner.</text>
</comment>
<comment type="similarity">
    <text evidence="5">Belongs to the TPD52 family.</text>
</comment>